<sequence length="304" mass="31380">MHTAPVEIVRAPTEARNSSTKDIDLLPTADILRLINAEDATVPRAVAEVLPELAKAVDLGVSVLRHGGRIHYFGAGTSGRLATMDAAELPPTFGIARDRVVAHHAGGPSALIHACEGIEDDFSSGRADAATVTSADLAIGLTASGRTPYVAGALDRAREAGARTVLVTADPHSALAADVDVHIGVATGAEVIAGSTRMKAGTAQKLILNAFSTAVMVRLGYTYSNLMVGVVATNAKLRGRMVTILTEATGLSEEDCAEALHRADGDTRIALVCLLTGVDVPTAAHALHAAHGSVRAALRELART</sequence>
<organism>
    <name type="scientific">Thermobifida fusca (strain YX)</name>
    <dbReference type="NCBI Taxonomy" id="269800"/>
    <lineage>
        <taxon>Bacteria</taxon>
        <taxon>Bacillati</taxon>
        <taxon>Actinomycetota</taxon>
        <taxon>Actinomycetes</taxon>
        <taxon>Streptosporangiales</taxon>
        <taxon>Nocardiopsidaceae</taxon>
        <taxon>Thermobifida</taxon>
    </lineage>
</organism>
<feature type="chain" id="PRO_0000249675" description="N-acetylmuramic acid 6-phosphate etherase">
    <location>
        <begin position="1"/>
        <end position="304"/>
    </location>
</feature>
<feature type="domain" description="SIS" evidence="1">
    <location>
        <begin position="60"/>
        <end position="221"/>
    </location>
</feature>
<feature type="active site" description="Proton donor" evidence="1">
    <location>
        <position position="88"/>
    </location>
</feature>
<feature type="active site" evidence="1">
    <location>
        <position position="119"/>
    </location>
</feature>
<gene>
    <name evidence="1" type="primary">murQ</name>
    <name type="ordered locus">Tfu_2324</name>
</gene>
<accession>Q47U25</accession>
<name>MURQ_THEFY</name>
<proteinExistence type="inferred from homology"/>
<dbReference type="EC" id="4.2.1.126" evidence="1"/>
<dbReference type="EMBL" id="CP000088">
    <property type="protein sequence ID" value="AAZ56357.1"/>
    <property type="molecule type" value="Genomic_DNA"/>
</dbReference>
<dbReference type="RefSeq" id="WP_011292747.1">
    <property type="nucleotide sequence ID" value="NC_007333.1"/>
</dbReference>
<dbReference type="SMR" id="Q47U25"/>
<dbReference type="STRING" id="269800.Tfu_2324"/>
<dbReference type="KEGG" id="tfu:Tfu_2324"/>
<dbReference type="eggNOG" id="COG2103">
    <property type="taxonomic scope" value="Bacteria"/>
</dbReference>
<dbReference type="HOGENOM" id="CLU_049049_1_1_11"/>
<dbReference type="OrthoDB" id="9813395at2"/>
<dbReference type="UniPathway" id="UPA00342"/>
<dbReference type="GO" id="GO:0097367">
    <property type="term" value="F:carbohydrate derivative binding"/>
    <property type="evidence" value="ECO:0007669"/>
    <property type="project" value="InterPro"/>
</dbReference>
<dbReference type="GO" id="GO:0016835">
    <property type="term" value="F:carbon-oxygen lyase activity"/>
    <property type="evidence" value="ECO:0007669"/>
    <property type="project" value="UniProtKB-UniRule"/>
</dbReference>
<dbReference type="GO" id="GO:0016803">
    <property type="term" value="F:ether hydrolase activity"/>
    <property type="evidence" value="ECO:0007669"/>
    <property type="project" value="TreeGrafter"/>
</dbReference>
<dbReference type="GO" id="GO:0046348">
    <property type="term" value="P:amino sugar catabolic process"/>
    <property type="evidence" value="ECO:0007669"/>
    <property type="project" value="InterPro"/>
</dbReference>
<dbReference type="GO" id="GO:0097173">
    <property type="term" value="P:N-acetylmuramic acid catabolic process"/>
    <property type="evidence" value="ECO:0007669"/>
    <property type="project" value="UniProtKB-UniPathway"/>
</dbReference>
<dbReference type="GO" id="GO:0009254">
    <property type="term" value="P:peptidoglycan turnover"/>
    <property type="evidence" value="ECO:0007669"/>
    <property type="project" value="TreeGrafter"/>
</dbReference>
<dbReference type="CDD" id="cd05007">
    <property type="entry name" value="SIS_Etherase"/>
    <property type="match status" value="1"/>
</dbReference>
<dbReference type="Gene3D" id="1.10.8.1080">
    <property type="match status" value="1"/>
</dbReference>
<dbReference type="Gene3D" id="3.40.50.10490">
    <property type="entry name" value="Glucose-6-phosphate isomerase like protein, domain 1"/>
    <property type="match status" value="1"/>
</dbReference>
<dbReference type="HAMAP" id="MF_00068">
    <property type="entry name" value="MurQ"/>
    <property type="match status" value="1"/>
</dbReference>
<dbReference type="InterPro" id="IPR005488">
    <property type="entry name" value="Etherase_MurQ"/>
</dbReference>
<dbReference type="InterPro" id="IPR005486">
    <property type="entry name" value="Glucokinase_regulatory_CS"/>
</dbReference>
<dbReference type="InterPro" id="IPR040190">
    <property type="entry name" value="MURQ/GCKR"/>
</dbReference>
<dbReference type="InterPro" id="IPR001347">
    <property type="entry name" value="SIS_dom"/>
</dbReference>
<dbReference type="InterPro" id="IPR046348">
    <property type="entry name" value="SIS_dom_sf"/>
</dbReference>
<dbReference type="InterPro" id="IPR009060">
    <property type="entry name" value="UBA-like_sf"/>
</dbReference>
<dbReference type="NCBIfam" id="TIGR00274">
    <property type="entry name" value="N-acetylmuramic acid 6-phosphate etherase"/>
    <property type="match status" value="1"/>
</dbReference>
<dbReference type="NCBIfam" id="NF003915">
    <property type="entry name" value="PRK05441.1"/>
    <property type="match status" value="1"/>
</dbReference>
<dbReference type="NCBIfam" id="NF009222">
    <property type="entry name" value="PRK12570.1"/>
    <property type="match status" value="1"/>
</dbReference>
<dbReference type="PANTHER" id="PTHR10088">
    <property type="entry name" value="GLUCOKINASE REGULATORY PROTEIN"/>
    <property type="match status" value="1"/>
</dbReference>
<dbReference type="PANTHER" id="PTHR10088:SF4">
    <property type="entry name" value="GLUCOKINASE REGULATORY PROTEIN"/>
    <property type="match status" value="1"/>
</dbReference>
<dbReference type="Pfam" id="PF22645">
    <property type="entry name" value="GKRP_SIS_N"/>
    <property type="match status" value="1"/>
</dbReference>
<dbReference type="SUPFAM" id="SSF53697">
    <property type="entry name" value="SIS domain"/>
    <property type="match status" value="1"/>
</dbReference>
<dbReference type="SUPFAM" id="SSF46934">
    <property type="entry name" value="UBA-like"/>
    <property type="match status" value="1"/>
</dbReference>
<dbReference type="PROSITE" id="PS01272">
    <property type="entry name" value="GCKR"/>
    <property type="match status" value="1"/>
</dbReference>
<dbReference type="PROSITE" id="PS51464">
    <property type="entry name" value="SIS"/>
    <property type="match status" value="1"/>
</dbReference>
<protein>
    <recommendedName>
        <fullName evidence="1">N-acetylmuramic acid 6-phosphate etherase</fullName>
        <shortName evidence="1">MurNAc-6-P etherase</shortName>
        <ecNumber evidence="1">4.2.1.126</ecNumber>
    </recommendedName>
    <alternativeName>
        <fullName evidence="1">N-acetylmuramic acid 6-phosphate hydrolase</fullName>
    </alternativeName>
    <alternativeName>
        <fullName evidence="1">N-acetylmuramic acid 6-phosphate lyase</fullName>
    </alternativeName>
</protein>
<keyword id="KW-0119">Carbohydrate metabolism</keyword>
<keyword id="KW-0456">Lyase</keyword>
<comment type="function">
    <text evidence="1">Specifically catalyzes the cleavage of the D-lactyl ether substituent of MurNAc 6-phosphate, producing GlcNAc 6-phosphate and D-lactate.</text>
</comment>
<comment type="catalytic activity">
    <reaction evidence="1">
        <text>N-acetyl-D-muramate 6-phosphate + H2O = N-acetyl-D-glucosamine 6-phosphate + (R)-lactate</text>
        <dbReference type="Rhea" id="RHEA:26410"/>
        <dbReference type="ChEBI" id="CHEBI:15377"/>
        <dbReference type="ChEBI" id="CHEBI:16004"/>
        <dbReference type="ChEBI" id="CHEBI:57513"/>
        <dbReference type="ChEBI" id="CHEBI:58722"/>
        <dbReference type="EC" id="4.2.1.126"/>
    </reaction>
</comment>
<comment type="pathway">
    <text evidence="1">Amino-sugar metabolism; N-acetylmuramate degradation.</text>
</comment>
<comment type="subunit">
    <text evidence="1">Homodimer.</text>
</comment>
<comment type="miscellaneous">
    <text evidence="1">A lyase-type mechanism (elimination/hydration) is suggested for the cleavage of the lactyl ether bond of MurNAc 6-phosphate, with the formation of an alpha,beta-unsaturated aldehyde intermediate with (E)-stereochemistry, followed by the syn addition of water to give product.</text>
</comment>
<comment type="similarity">
    <text evidence="1">Belongs to the GCKR-like family. MurNAc-6-P etherase subfamily.</text>
</comment>
<reference key="1">
    <citation type="journal article" date="2007" name="J. Bacteriol.">
        <title>Genome sequence and analysis of the soil cellulolytic actinomycete Thermobifida fusca YX.</title>
        <authorList>
            <person name="Lykidis A."/>
            <person name="Mavromatis K."/>
            <person name="Ivanova N."/>
            <person name="Anderson I."/>
            <person name="Land M."/>
            <person name="DiBartolo G."/>
            <person name="Martinez M."/>
            <person name="Lapidus A."/>
            <person name="Lucas S."/>
            <person name="Copeland A."/>
            <person name="Richardson P."/>
            <person name="Wilson D.B."/>
            <person name="Kyrpides N."/>
        </authorList>
    </citation>
    <scope>NUCLEOTIDE SEQUENCE [LARGE SCALE GENOMIC DNA]</scope>
    <source>
        <strain>YX</strain>
    </source>
</reference>
<evidence type="ECO:0000255" key="1">
    <source>
        <dbReference type="HAMAP-Rule" id="MF_00068"/>
    </source>
</evidence>